<protein>
    <recommendedName>
        <fullName evidence="1">Antiholin-like protein LrgB</fullName>
    </recommendedName>
</protein>
<accession>Q814J3</accession>
<name>LRGB_BACCR</name>
<dbReference type="EMBL" id="AE016877">
    <property type="protein sequence ID" value="AAP12300.1"/>
    <property type="molecule type" value="Genomic_DNA"/>
</dbReference>
<dbReference type="RefSeq" id="NP_835099.1">
    <property type="nucleotide sequence ID" value="NC_004722.1"/>
</dbReference>
<dbReference type="RefSeq" id="WP_000168869.1">
    <property type="nucleotide sequence ID" value="NZ_CP138336.1"/>
</dbReference>
<dbReference type="STRING" id="226900.BC_5438"/>
<dbReference type="GeneID" id="93005687"/>
<dbReference type="KEGG" id="bce:BC5438"/>
<dbReference type="PATRIC" id="fig|226900.8.peg.5618"/>
<dbReference type="HOGENOM" id="CLU_082099_1_0_9"/>
<dbReference type="OrthoDB" id="9811701at2"/>
<dbReference type="Proteomes" id="UP000001417">
    <property type="component" value="Chromosome"/>
</dbReference>
<dbReference type="GO" id="GO:0005886">
    <property type="term" value="C:plasma membrane"/>
    <property type="evidence" value="ECO:0007669"/>
    <property type="project" value="UniProtKB-SubCell"/>
</dbReference>
<dbReference type="GO" id="GO:0019835">
    <property type="term" value="P:cytolysis"/>
    <property type="evidence" value="ECO:0007669"/>
    <property type="project" value="UniProtKB-UniRule"/>
</dbReference>
<dbReference type="GO" id="GO:0031640">
    <property type="term" value="P:killing of cells of another organism"/>
    <property type="evidence" value="ECO:0007669"/>
    <property type="project" value="UniProtKB-KW"/>
</dbReference>
<dbReference type="GO" id="GO:0012501">
    <property type="term" value="P:programmed cell death"/>
    <property type="evidence" value="ECO:0007669"/>
    <property type="project" value="UniProtKB-UniRule"/>
</dbReference>
<dbReference type="HAMAP" id="MF_01142">
    <property type="entry name" value="LrgB"/>
    <property type="match status" value="1"/>
</dbReference>
<dbReference type="InterPro" id="IPR024891">
    <property type="entry name" value="Antiholin-like_LrgB"/>
</dbReference>
<dbReference type="InterPro" id="IPR007300">
    <property type="entry name" value="CidB/LrgB"/>
</dbReference>
<dbReference type="NCBIfam" id="NF003291">
    <property type="entry name" value="PRK04288.1"/>
    <property type="match status" value="1"/>
</dbReference>
<dbReference type="PANTHER" id="PTHR30249:SF0">
    <property type="entry name" value="PLASTIDAL GLYCOLATE_GLYCERATE TRANSLOCATOR 1, CHLOROPLASTIC"/>
    <property type="match status" value="1"/>
</dbReference>
<dbReference type="PANTHER" id="PTHR30249">
    <property type="entry name" value="PUTATIVE SEROTONIN TRANSPORTER"/>
    <property type="match status" value="1"/>
</dbReference>
<dbReference type="Pfam" id="PF04172">
    <property type="entry name" value="LrgB"/>
    <property type="match status" value="1"/>
</dbReference>
<comment type="function">
    <text evidence="1">Inhibits the expression or activity of extracellular murein hydrolases by interacting, possibly with LrgA, with the holin-like protein CidA. The LrgAB and CidA proteins may affect the proton motive force of the membrane. May be involved in programmed cell death (PCD), possibly triggering PCD in response to antibiotics and environmental stresses.</text>
</comment>
<comment type="subcellular location">
    <subcellularLocation>
        <location evidence="1">Cell membrane</location>
        <topology evidence="1">Multi-pass membrane protein</topology>
    </subcellularLocation>
</comment>
<comment type="similarity">
    <text evidence="1">Belongs to the CidB/LrgB family. LrgB subfamily.</text>
</comment>
<reference key="1">
    <citation type="journal article" date="2003" name="Nature">
        <title>Genome sequence of Bacillus cereus and comparative analysis with Bacillus anthracis.</title>
        <authorList>
            <person name="Ivanova N."/>
            <person name="Sorokin A."/>
            <person name="Anderson I."/>
            <person name="Galleron N."/>
            <person name="Candelon B."/>
            <person name="Kapatral V."/>
            <person name="Bhattacharyya A."/>
            <person name="Reznik G."/>
            <person name="Mikhailova N."/>
            <person name="Lapidus A."/>
            <person name="Chu L."/>
            <person name="Mazur M."/>
            <person name="Goltsman E."/>
            <person name="Larsen N."/>
            <person name="D'Souza M."/>
            <person name="Walunas T."/>
            <person name="Grechkin Y."/>
            <person name="Pusch G."/>
            <person name="Haselkorn R."/>
            <person name="Fonstein M."/>
            <person name="Ehrlich S.D."/>
            <person name="Overbeek R."/>
            <person name="Kyrpides N.C."/>
        </authorList>
    </citation>
    <scope>NUCLEOTIDE SEQUENCE [LARGE SCALE GENOMIC DNA]</scope>
    <source>
        <strain>ATCC 14579 / DSM 31 / CCUG 7414 / JCM 2152 / NBRC 15305 / NCIMB 9373 / NCTC 2599 / NRRL B-3711</strain>
    </source>
</reference>
<evidence type="ECO:0000255" key="1">
    <source>
        <dbReference type="HAMAP-Rule" id="MF_01142"/>
    </source>
</evidence>
<keyword id="KW-1003">Cell membrane</keyword>
<keyword id="KW-0204">Cytolysis</keyword>
<keyword id="KW-0472">Membrane</keyword>
<keyword id="KW-1185">Reference proteome</keyword>
<keyword id="KW-0812">Transmembrane</keyword>
<keyword id="KW-1133">Transmembrane helix</keyword>
<organism>
    <name type="scientific">Bacillus cereus (strain ATCC 14579 / DSM 31 / CCUG 7414 / JCM 2152 / NBRC 15305 / NCIMB 9373 / NCTC 2599 / NRRL B-3711)</name>
    <dbReference type="NCBI Taxonomy" id="226900"/>
    <lineage>
        <taxon>Bacteria</taxon>
        <taxon>Bacillati</taxon>
        <taxon>Bacillota</taxon>
        <taxon>Bacilli</taxon>
        <taxon>Bacillales</taxon>
        <taxon>Bacillaceae</taxon>
        <taxon>Bacillus</taxon>
        <taxon>Bacillus cereus group</taxon>
    </lineage>
</organism>
<feature type="chain" id="PRO_0000217054" description="Antiholin-like protein LrgB">
    <location>
        <begin position="1"/>
        <end position="230"/>
    </location>
</feature>
<feature type="transmembrane region" description="Helical" evidence="1">
    <location>
        <begin position="5"/>
        <end position="25"/>
    </location>
</feature>
<feature type="transmembrane region" description="Helical" evidence="1">
    <location>
        <begin position="32"/>
        <end position="54"/>
    </location>
</feature>
<feature type="transmembrane region" description="Helical" evidence="1">
    <location>
        <begin position="64"/>
        <end position="81"/>
    </location>
</feature>
<feature type="transmembrane region" description="Helical" evidence="1">
    <location>
        <begin position="94"/>
        <end position="116"/>
    </location>
</feature>
<feature type="transmembrane region" description="Helical" evidence="1">
    <location>
        <begin position="143"/>
        <end position="165"/>
    </location>
</feature>
<feature type="transmembrane region" description="Helical" evidence="1">
    <location>
        <begin position="178"/>
        <end position="197"/>
    </location>
</feature>
<feature type="transmembrane region" description="Helical" evidence="1">
    <location>
        <begin position="207"/>
        <end position="229"/>
    </location>
</feature>
<proteinExistence type="inferred from homology"/>
<gene>
    <name evidence="1" type="primary">lrgB</name>
    <name type="ordered locus">BC_5438</name>
</gene>
<sequence length="230" mass="24349">MASTMTPYFGIVVSLIAYGIGTLLFKHSKGFFLFTPLFVAMVLGIVFLKVGNFTFEEYNTGGKMISFFLEPATIAFAIPLYKQVDKLKKYWWQILSAIVVGSICSVIVVFIVAKAIGLDTAVMNSMLPQAATTAIALPISESIGGIPAITSFAVIFNAVIVYALGALFLKTFRVKHPIAKGLALGTAGHALGVAVGIEMGEVEAAMASIAVTVVGVVTVVVIPMFMPFIG</sequence>